<evidence type="ECO:0000255" key="1">
    <source>
        <dbReference type="HAMAP-Rule" id="MF_01146"/>
    </source>
</evidence>
<protein>
    <recommendedName>
        <fullName evidence="1">Aquaporin Z</fullName>
    </recommendedName>
</protein>
<keyword id="KW-0997">Cell inner membrane</keyword>
<keyword id="KW-1003">Cell membrane</keyword>
<keyword id="KW-0472">Membrane</keyword>
<keyword id="KW-0677">Repeat</keyword>
<keyword id="KW-0812">Transmembrane</keyword>
<keyword id="KW-1133">Transmembrane helix</keyword>
<keyword id="KW-0813">Transport</keyword>
<gene>
    <name evidence="1" type="primary">aqpZ</name>
    <name type="ordered locus">RPA2485</name>
</gene>
<sequence length="240" mass="24508">MNTNKYLAEMIGTFWLTFAGCGSAVIAAGFPQVGIGLVGVSLAFGLSVVTMAYAIGHISGCHLNPAVTLGLAAGGRFPVKQIAPYIIAQVLGAIAAAALLYLIASGAAGFDLAKGFASNGYGAHSPGQYNLVACFVMEVVMTMMFLFVIMGSTHGKAPAGFAPLAIGLALVMIHLVSIPVTNTSVNPARSTGPALFVGGWAIGQLWLFWVAPLLGGVLGGVIYRVLSPEPTGVVEGVKAR</sequence>
<accession>P60925</accession>
<comment type="function">
    <text evidence="1">Channel that permits osmotically driven movement of water in both directions. It is involved in the osmoregulation and in the maintenance of cell turgor during volume expansion in rapidly growing cells. It mediates rapid entry or exit of water in response to abrupt changes in osmolarity.</text>
</comment>
<comment type="catalytic activity">
    <reaction evidence="1">
        <text>H2O(in) = H2O(out)</text>
        <dbReference type="Rhea" id="RHEA:29667"/>
        <dbReference type="ChEBI" id="CHEBI:15377"/>
    </reaction>
    <physiologicalReaction direction="left-to-right" evidence="1">
        <dbReference type="Rhea" id="RHEA:29668"/>
    </physiologicalReaction>
    <physiologicalReaction direction="right-to-left" evidence="1">
        <dbReference type="Rhea" id="RHEA:29669"/>
    </physiologicalReaction>
</comment>
<comment type="subunit">
    <text evidence="1">Homotetramer.</text>
</comment>
<comment type="subcellular location">
    <subcellularLocation>
        <location evidence="1">Cell inner membrane</location>
        <topology evidence="1">Multi-pass membrane protein</topology>
    </subcellularLocation>
</comment>
<comment type="domain">
    <text evidence="1">Aquaporins contain two tandem repeats each containing three membrane-spanning domains and a pore-forming loop with the signature motif Asn-Pro-Ala (NPA).</text>
</comment>
<comment type="similarity">
    <text evidence="1">Belongs to the MIP/aquaporin (TC 1.A.8) family.</text>
</comment>
<proteinExistence type="inferred from homology"/>
<dbReference type="EMBL" id="BX572601">
    <property type="protein sequence ID" value="CAE27926.1"/>
    <property type="molecule type" value="Genomic_DNA"/>
</dbReference>
<dbReference type="RefSeq" id="WP_011158035.1">
    <property type="nucleotide sequence ID" value="NZ_CP116810.1"/>
</dbReference>
<dbReference type="SMR" id="P60925"/>
<dbReference type="STRING" id="258594.RPA2485"/>
<dbReference type="GeneID" id="66893548"/>
<dbReference type="eggNOG" id="COG0580">
    <property type="taxonomic scope" value="Bacteria"/>
</dbReference>
<dbReference type="HOGENOM" id="CLU_020019_3_2_5"/>
<dbReference type="PhylomeDB" id="P60925"/>
<dbReference type="GO" id="GO:0005886">
    <property type="term" value="C:plasma membrane"/>
    <property type="evidence" value="ECO:0007669"/>
    <property type="project" value="UniProtKB-SubCell"/>
</dbReference>
<dbReference type="GO" id="GO:0015250">
    <property type="term" value="F:water channel activity"/>
    <property type="evidence" value="ECO:0007669"/>
    <property type="project" value="UniProtKB-UniRule"/>
</dbReference>
<dbReference type="CDD" id="cd00333">
    <property type="entry name" value="MIP"/>
    <property type="match status" value="1"/>
</dbReference>
<dbReference type="FunFam" id="1.20.1080.10:FF:000007">
    <property type="entry name" value="Aquaporin Z"/>
    <property type="match status" value="1"/>
</dbReference>
<dbReference type="Gene3D" id="1.20.1080.10">
    <property type="entry name" value="Glycerol uptake facilitator protein"/>
    <property type="match status" value="1"/>
</dbReference>
<dbReference type="HAMAP" id="MF_01146">
    <property type="entry name" value="Aquaporin_Z"/>
    <property type="match status" value="1"/>
</dbReference>
<dbReference type="InterPro" id="IPR023271">
    <property type="entry name" value="Aquaporin-like"/>
</dbReference>
<dbReference type="InterPro" id="IPR034294">
    <property type="entry name" value="Aquaporin_transptr"/>
</dbReference>
<dbReference type="InterPro" id="IPR023743">
    <property type="entry name" value="Aquaporin_Z"/>
</dbReference>
<dbReference type="InterPro" id="IPR000425">
    <property type="entry name" value="MIP"/>
</dbReference>
<dbReference type="InterPro" id="IPR022357">
    <property type="entry name" value="MIP_CS"/>
</dbReference>
<dbReference type="NCBIfam" id="TIGR00861">
    <property type="entry name" value="MIP"/>
    <property type="match status" value="1"/>
</dbReference>
<dbReference type="NCBIfam" id="NF003838">
    <property type="entry name" value="PRK05420.1"/>
    <property type="match status" value="1"/>
</dbReference>
<dbReference type="PANTHER" id="PTHR19139">
    <property type="entry name" value="AQUAPORIN TRANSPORTER"/>
    <property type="match status" value="1"/>
</dbReference>
<dbReference type="PANTHER" id="PTHR19139:SF199">
    <property type="entry name" value="MIP17260P"/>
    <property type="match status" value="1"/>
</dbReference>
<dbReference type="Pfam" id="PF00230">
    <property type="entry name" value="MIP"/>
    <property type="match status" value="1"/>
</dbReference>
<dbReference type="PRINTS" id="PR00783">
    <property type="entry name" value="MINTRINSICP"/>
</dbReference>
<dbReference type="SUPFAM" id="SSF81338">
    <property type="entry name" value="Aquaporin-like"/>
    <property type="match status" value="1"/>
</dbReference>
<dbReference type="PROSITE" id="PS00221">
    <property type="entry name" value="MIP"/>
    <property type="match status" value="1"/>
</dbReference>
<feature type="chain" id="PRO_0000063998" description="Aquaporin Z">
    <location>
        <begin position="1"/>
        <end position="240"/>
    </location>
</feature>
<feature type="transmembrane region" description="Helical" evidence="1">
    <location>
        <begin position="10"/>
        <end position="30"/>
    </location>
</feature>
<feature type="transmembrane region" description="Helical" evidence="1">
    <location>
        <begin position="35"/>
        <end position="55"/>
    </location>
</feature>
<feature type="transmembrane region" description="Helical" evidence="1">
    <location>
        <begin position="90"/>
        <end position="110"/>
    </location>
</feature>
<feature type="transmembrane region" description="Helical" evidence="1">
    <location>
        <begin position="131"/>
        <end position="151"/>
    </location>
</feature>
<feature type="transmembrane region" description="Helical" evidence="1">
    <location>
        <begin position="160"/>
        <end position="180"/>
    </location>
</feature>
<feature type="transmembrane region" description="Helical" evidence="1">
    <location>
        <begin position="202"/>
        <end position="222"/>
    </location>
</feature>
<feature type="short sequence motif" description="NPA 1" evidence="1">
    <location>
        <begin position="64"/>
        <end position="66"/>
    </location>
</feature>
<feature type="short sequence motif" description="NPA 2" evidence="1">
    <location>
        <begin position="186"/>
        <end position="188"/>
    </location>
</feature>
<feature type="site" description="Involved in tetramerization or stability of the tetramer" evidence="1">
    <location>
        <position position="21"/>
    </location>
</feature>
<feature type="site" description="Selectivity filter" evidence="1">
    <location>
        <position position="44"/>
    </location>
</feature>
<feature type="site" description="Selectivity filter" evidence="1">
    <location>
        <position position="174"/>
    </location>
</feature>
<feature type="site" description="Selectivity filter" evidence="1">
    <location>
        <position position="183"/>
    </location>
</feature>
<feature type="site" description="Selectivity filter" evidence="1">
    <location>
        <position position="189"/>
    </location>
</feature>
<organism>
    <name type="scientific">Rhodopseudomonas palustris (strain ATCC BAA-98 / CGA009)</name>
    <dbReference type="NCBI Taxonomy" id="258594"/>
    <lineage>
        <taxon>Bacteria</taxon>
        <taxon>Pseudomonadati</taxon>
        <taxon>Pseudomonadota</taxon>
        <taxon>Alphaproteobacteria</taxon>
        <taxon>Hyphomicrobiales</taxon>
        <taxon>Nitrobacteraceae</taxon>
        <taxon>Rhodopseudomonas</taxon>
    </lineage>
</organism>
<reference key="1">
    <citation type="journal article" date="2004" name="Nat. Biotechnol.">
        <title>Complete genome sequence of the metabolically versatile photosynthetic bacterium Rhodopseudomonas palustris.</title>
        <authorList>
            <person name="Larimer F.W."/>
            <person name="Chain P."/>
            <person name="Hauser L."/>
            <person name="Lamerdin J.E."/>
            <person name="Malfatti S."/>
            <person name="Do L."/>
            <person name="Land M.L."/>
            <person name="Pelletier D.A."/>
            <person name="Beatty J.T."/>
            <person name="Lang A.S."/>
            <person name="Tabita F.R."/>
            <person name="Gibson J.L."/>
            <person name="Hanson T.E."/>
            <person name="Bobst C."/>
            <person name="Torres y Torres J.L."/>
            <person name="Peres C."/>
            <person name="Harrison F.H."/>
            <person name="Gibson J."/>
            <person name="Harwood C.S."/>
        </authorList>
    </citation>
    <scope>NUCLEOTIDE SEQUENCE [LARGE SCALE GENOMIC DNA]</scope>
    <source>
        <strain>ATCC BAA-98 / CGA009</strain>
    </source>
</reference>
<name>AQPZ_RHOPA</name>